<reference key="1">
    <citation type="journal article" date="2002" name="Nat. Genet.">
        <title>Mutation of ALMS1, a large gene with a tandem repeat encoding 47 amino acids, causes Alstrom syndrome.</title>
        <authorList>
            <person name="Hearn T."/>
            <person name="Renforth G.L."/>
            <person name="Spalluto C."/>
            <person name="Hanley N.A."/>
            <person name="Piper K."/>
            <person name="Brickwood S."/>
            <person name="White C."/>
            <person name="Connolly V."/>
            <person name="Taylor J.F.N."/>
            <person name="Russell-Eggitt I."/>
            <person name="Bonneau D."/>
            <person name="Walker M."/>
            <person name="Wilson D.I."/>
        </authorList>
    </citation>
    <scope>NUCLEOTIDE SEQUENCE [MRNA] (ISOFORM 1)</scope>
    <scope>VARIANTS PRO-525 DEL; GLY-672 AND ARG-2112</scope>
    <scope>TISSUE SPECIFICITY</scope>
    <scope>DEVELOPMENTAL STAGE</scope>
    <source>
        <tissue>Lymphoblast</tissue>
    </source>
</reference>
<reference key="2">
    <citation type="journal article" date="2005" name="Nature">
        <title>Generation and annotation of the DNA sequences of human chromosomes 2 and 4.</title>
        <authorList>
            <person name="Hillier L.W."/>
            <person name="Graves T.A."/>
            <person name="Fulton R.S."/>
            <person name="Fulton L.A."/>
            <person name="Pepin K.H."/>
            <person name="Minx P."/>
            <person name="Wagner-McPherson C."/>
            <person name="Layman D."/>
            <person name="Wylie K."/>
            <person name="Sekhon M."/>
            <person name="Becker M.C."/>
            <person name="Fewell G.A."/>
            <person name="Delehaunty K.D."/>
            <person name="Miner T.L."/>
            <person name="Nash W.E."/>
            <person name="Kremitzki C."/>
            <person name="Oddy L."/>
            <person name="Du H."/>
            <person name="Sun H."/>
            <person name="Bradshaw-Cordum H."/>
            <person name="Ali J."/>
            <person name="Carter J."/>
            <person name="Cordes M."/>
            <person name="Harris A."/>
            <person name="Isak A."/>
            <person name="van Brunt A."/>
            <person name="Nguyen C."/>
            <person name="Du F."/>
            <person name="Courtney L."/>
            <person name="Kalicki J."/>
            <person name="Ozersky P."/>
            <person name="Abbott S."/>
            <person name="Armstrong J."/>
            <person name="Belter E.A."/>
            <person name="Caruso L."/>
            <person name="Cedroni M."/>
            <person name="Cotton M."/>
            <person name="Davidson T."/>
            <person name="Desai A."/>
            <person name="Elliott G."/>
            <person name="Erb T."/>
            <person name="Fronick C."/>
            <person name="Gaige T."/>
            <person name="Haakenson W."/>
            <person name="Haglund K."/>
            <person name="Holmes A."/>
            <person name="Harkins R."/>
            <person name="Kim K."/>
            <person name="Kruchowski S.S."/>
            <person name="Strong C.M."/>
            <person name="Grewal N."/>
            <person name="Goyea E."/>
            <person name="Hou S."/>
            <person name="Levy A."/>
            <person name="Martinka S."/>
            <person name="Mead K."/>
            <person name="McLellan M.D."/>
            <person name="Meyer R."/>
            <person name="Randall-Maher J."/>
            <person name="Tomlinson C."/>
            <person name="Dauphin-Kohlberg S."/>
            <person name="Kozlowicz-Reilly A."/>
            <person name="Shah N."/>
            <person name="Swearengen-Shahid S."/>
            <person name="Snider J."/>
            <person name="Strong J.T."/>
            <person name="Thompson J."/>
            <person name="Yoakum M."/>
            <person name="Leonard S."/>
            <person name="Pearman C."/>
            <person name="Trani L."/>
            <person name="Radionenko M."/>
            <person name="Waligorski J.E."/>
            <person name="Wang C."/>
            <person name="Rock S.M."/>
            <person name="Tin-Wollam A.-M."/>
            <person name="Maupin R."/>
            <person name="Latreille P."/>
            <person name="Wendl M.C."/>
            <person name="Yang S.-P."/>
            <person name="Pohl C."/>
            <person name="Wallis J.W."/>
            <person name="Spieth J."/>
            <person name="Bieri T.A."/>
            <person name="Berkowicz N."/>
            <person name="Nelson J.O."/>
            <person name="Osborne J."/>
            <person name="Ding L."/>
            <person name="Meyer R."/>
            <person name="Sabo A."/>
            <person name="Shotland Y."/>
            <person name="Sinha P."/>
            <person name="Wohldmann P.E."/>
            <person name="Cook L.L."/>
            <person name="Hickenbotham M.T."/>
            <person name="Eldred J."/>
            <person name="Williams D."/>
            <person name="Jones T.A."/>
            <person name="She X."/>
            <person name="Ciccarelli F.D."/>
            <person name="Izaurralde E."/>
            <person name="Taylor J."/>
            <person name="Schmutz J."/>
            <person name="Myers R.M."/>
            <person name="Cox D.R."/>
            <person name="Huang X."/>
            <person name="McPherson J.D."/>
            <person name="Mardis E.R."/>
            <person name="Clifton S.W."/>
            <person name="Warren W.C."/>
            <person name="Chinwalla A.T."/>
            <person name="Eddy S.R."/>
            <person name="Marra M.A."/>
            <person name="Ovcharenko I."/>
            <person name="Furey T.S."/>
            <person name="Miller W."/>
            <person name="Eichler E.E."/>
            <person name="Bork P."/>
            <person name="Suyama M."/>
            <person name="Torrents D."/>
            <person name="Waterston R.H."/>
            <person name="Wilson R.K."/>
        </authorList>
    </citation>
    <scope>NUCLEOTIDE SEQUENCE [LARGE SCALE GENOMIC DNA]</scope>
    <scope>VARIANT PRO-525 DEL</scope>
</reference>
<reference key="3">
    <citation type="journal article" date="1997" name="DNA Res.">
        <title>Prediction of the coding sequences of unidentified human genes. VII. The complete sequences of 100 new cDNA clones from brain which can code for large proteins in vitro.</title>
        <authorList>
            <person name="Nagase T."/>
            <person name="Ishikawa K."/>
            <person name="Nakajima D."/>
            <person name="Ohira M."/>
            <person name="Seki N."/>
            <person name="Miyajima N."/>
            <person name="Tanaka A."/>
            <person name="Kotani H."/>
            <person name="Nomura N."/>
            <person name="Ohara O."/>
        </authorList>
    </citation>
    <scope>NUCLEOTIDE SEQUENCE [LARGE SCALE MRNA] OF 2067-4168 (ISOFORM 2)</scope>
    <source>
        <tissue>Brain</tissue>
    </source>
</reference>
<reference key="4">
    <citation type="journal article" date="2002" name="DNA Res.">
        <title>Construction of expression-ready cDNA clones for KIAA genes: manual curation of 330 KIAA cDNA clones.</title>
        <authorList>
            <person name="Nakajima D."/>
            <person name="Okazaki N."/>
            <person name="Yamakawa H."/>
            <person name="Kikuno R."/>
            <person name="Ohara O."/>
            <person name="Nagase T."/>
        </authorList>
    </citation>
    <scope>SEQUENCE REVISION</scope>
</reference>
<reference key="5">
    <citation type="journal article" date="2004" name="Genome Res.">
        <title>The status, quality, and expansion of the NIH full-length cDNA project: the Mammalian Gene Collection (MGC).</title>
        <authorList>
            <consortium name="The MGC Project Team"/>
        </authorList>
    </citation>
    <scope>NUCLEOTIDE SEQUENCE [LARGE SCALE MRNA] OF 2401-4168 (ISOFORM 3)</scope>
    <scope>VARIANTS ASN-2575 AND HIS-2673</scope>
    <source>
        <tissue>Testis</tissue>
    </source>
</reference>
<reference key="6">
    <citation type="journal article" date="2002" name="Nat. Genet.">
        <title>Mutations in ALMS1 cause obesity, type 2 diabetes and neurosensory degeneration in Alstrom syndrome.</title>
        <authorList>
            <person name="Collin G.B."/>
            <person name="Marshall J.D."/>
            <person name="Ikeda A."/>
            <person name="So W.V."/>
            <person name="Russell-Eggitt I."/>
            <person name="Maffei P."/>
            <person name="Beck S."/>
            <person name="Boerkoel C."/>
            <person name="Sicolo N."/>
            <person name="Martin M."/>
            <person name="Nishina P.M."/>
            <person name="Naggert J.K."/>
        </authorList>
    </citation>
    <scope>INVOLVEMENT IN ALSTROM SYNDROME</scope>
    <scope>TISSUE SPECIFICITY</scope>
    <scope>DEVELOPMENTAL STAGE</scope>
</reference>
<reference key="7">
    <citation type="journal article" date="2003" name="Nature">
        <title>Proteomic characterization of the human centrosome by protein correlation profiling.</title>
        <authorList>
            <person name="Andersen J.S."/>
            <person name="Wilkinson C.J."/>
            <person name="Mayor T."/>
            <person name="Mortensen P."/>
            <person name="Nigg E.A."/>
            <person name="Mann M."/>
        </authorList>
    </citation>
    <scope>IDENTIFICATION BY MASS SPECTROMETRY</scope>
    <scope>SUBCELLULAR LOCATION [LARGE SCALE ANALYSIS]</scope>
    <source>
        <tissue>Lymphoblast</tissue>
    </source>
</reference>
<reference key="8">
    <citation type="journal article" date="2005" name="Diabetes">
        <title>Subcellular localization of ALMS1 supports involvement of centrosome and basal body dysfunction in the pathogenesis of obesity, insulin resistance, and type 2 diabetes.</title>
        <authorList>
            <person name="Hearn T."/>
            <person name="Spalluto C."/>
            <person name="Phillips V.J."/>
            <person name="Renforth G.L."/>
            <person name="Copin N."/>
            <person name="Hanley N.A."/>
            <person name="Wilson D.I."/>
        </authorList>
    </citation>
    <scope>SUBCELLULAR LOCATION</scope>
    <scope>POSSIBLE FUNCTION</scope>
</reference>
<reference key="9">
    <citation type="journal article" date="2007" name="J. Cell Biol.">
        <title>Cep164, a novel centriole appendage protein required for primary cilium formation.</title>
        <authorList>
            <person name="Graser S."/>
            <person name="Stierhof Y.-D."/>
            <person name="Lavoie S.B."/>
            <person name="Gassner O.S."/>
            <person name="Lamla S."/>
            <person name="Le Clech M."/>
            <person name="Nigg E.A."/>
        </authorList>
    </citation>
    <scope>FUNCTION</scope>
</reference>
<reference key="10">
    <citation type="journal article" date="2008" name="Proc. Natl. Acad. Sci. U.S.A.">
        <title>A quantitative atlas of mitotic phosphorylation.</title>
        <authorList>
            <person name="Dephoure N."/>
            <person name="Zhou C."/>
            <person name="Villen J."/>
            <person name="Beausoleil S.A."/>
            <person name="Bakalarski C.E."/>
            <person name="Elledge S.J."/>
            <person name="Gygi S.P."/>
        </authorList>
    </citation>
    <scope>IDENTIFICATION BY MASS SPECTROMETRY [LARGE SCALE ANALYSIS]</scope>
    <source>
        <tissue>Cervix carcinoma</tissue>
    </source>
</reference>
<reference key="11">
    <citation type="journal article" date="2010" name="Mol. Biol. Cell">
        <title>Centriolar association of ALMS1 and likely centrosomal functions of the ALMS motif-containing proteins C10orf90 and KIAA1731.</title>
        <authorList>
            <person name="Knorz V.J."/>
            <person name="Spalluto C."/>
            <person name="Lessard M."/>
            <person name="Purvis T.L."/>
            <person name="Adigun F.F."/>
            <person name="Collin G.B."/>
            <person name="Hanley N.A."/>
            <person name="Wilson D.I."/>
            <person name="Hearn T."/>
        </authorList>
    </citation>
    <scope>SUBCELLULAR LOCATION</scope>
    <scope>POSSIBLE FUNCTION</scope>
</reference>
<reference key="12">
    <citation type="journal article" date="2010" name="Sci. Signal.">
        <title>Quantitative phosphoproteomics reveals widespread full phosphorylation site occupancy during mitosis.</title>
        <authorList>
            <person name="Olsen J.V."/>
            <person name="Vermeulen M."/>
            <person name="Santamaria A."/>
            <person name="Kumar C."/>
            <person name="Miller M.L."/>
            <person name="Jensen L.J."/>
            <person name="Gnad F."/>
            <person name="Cox J."/>
            <person name="Jensen T.S."/>
            <person name="Nigg E.A."/>
            <person name="Brunak S."/>
            <person name="Mann M."/>
        </authorList>
    </citation>
    <scope>PHOSPHORYLATION [LARGE SCALE ANALYSIS] AT SER-2632</scope>
    <scope>IDENTIFICATION BY MASS SPECTROMETRY [LARGE SCALE ANALYSIS]</scope>
    <source>
        <tissue>Cervix carcinoma</tissue>
    </source>
</reference>
<reference key="13">
    <citation type="journal article" date="2013" name="J. Proteome Res.">
        <title>Toward a comprehensive characterization of a human cancer cell phosphoproteome.</title>
        <authorList>
            <person name="Zhou H."/>
            <person name="Di Palma S."/>
            <person name="Preisinger C."/>
            <person name="Peng M."/>
            <person name="Polat A.N."/>
            <person name="Heck A.J."/>
            <person name="Mohammed S."/>
        </authorList>
    </citation>
    <scope>PHOSPHORYLATION [LARGE SCALE ANALYSIS] AT SER-464; SER-1189; SER-2143; SER-2466; SER-2632 AND SER-2805</scope>
    <scope>IDENTIFICATION BY MASS SPECTROMETRY [LARGE SCALE ANALYSIS]</scope>
    <source>
        <tissue>Cervix carcinoma</tissue>
        <tissue>Erythroleukemia</tissue>
    </source>
</reference>
<reference key="14">
    <citation type="journal article" date="2014" name="J. Proteomics">
        <title>An enzyme assisted RP-RPLC approach for in-depth analysis of human liver phosphoproteome.</title>
        <authorList>
            <person name="Bian Y."/>
            <person name="Song C."/>
            <person name="Cheng K."/>
            <person name="Dong M."/>
            <person name="Wang F."/>
            <person name="Huang J."/>
            <person name="Sun D."/>
            <person name="Wang L."/>
            <person name="Ye M."/>
            <person name="Zou H."/>
        </authorList>
    </citation>
    <scope>PHOSPHORYLATION [LARGE SCALE ANALYSIS] AT SER-2466</scope>
    <scope>IDENTIFICATION BY MASS SPECTROMETRY [LARGE SCALE ANALYSIS]</scope>
    <source>
        <tissue>Liver</tissue>
    </source>
</reference>
<gene>
    <name type="primary">ALMS1</name>
    <name type="synonym">KIAA0328</name>
</gene>
<organism>
    <name type="scientific">Homo sapiens</name>
    <name type="common">Human</name>
    <dbReference type="NCBI Taxonomy" id="9606"/>
    <lineage>
        <taxon>Eukaryota</taxon>
        <taxon>Metazoa</taxon>
        <taxon>Chordata</taxon>
        <taxon>Craniata</taxon>
        <taxon>Vertebrata</taxon>
        <taxon>Euteleostomi</taxon>
        <taxon>Mammalia</taxon>
        <taxon>Eutheria</taxon>
        <taxon>Euarchontoglires</taxon>
        <taxon>Primates</taxon>
        <taxon>Haplorrhini</taxon>
        <taxon>Catarrhini</taxon>
        <taxon>Hominidae</taxon>
        <taxon>Homo</taxon>
    </lineage>
</organism>
<sequence length="4168" mass="461062">MEPEDLPWPGELEEEEEEEEEEEEEEEEAAAAAAANVDDVVVVEEVEEEAGRELDSDSHYGPQHLESIDDEEDEEAKAWLQAHPGRILPPLSPPQHRYSEGERTSLEKIVPLTCHVWQQIVYQGNSRTQISDTNVVCLETTAQRGSGDDQKTESWHCLPQEMDSSQTLDTSQTRFNVRTEDTEVTDFPSLEEGILTQSENQVKEPNRDLFCSPLLVIQDSFASPDLPLLTCLTQDQEFAPDSLFHQSELSFAPLRGIPDKSEDTEWSSRPSEVSEALFQATAEVASDLASSRFSVSQHPLIGSTAVGSQCPFLPSEQGNNEETISSVDELKIPKDCDRYDDLCSYMSWKTRKDTQWPENNLADKDQVSVATSFDITDENIATKRSDHFDAARSYGQYWTQEDSSKQAETYLTKGLQGKVESDVITLDGLNENAVVCSERVAELQRKPTRESEYHSSDLRMLRMSPDTVPKAPKHLKAGDTSKGGIAKVTQSNLKSGITTTPVDSDIGSHLSLSLEDLSQLAVSSPLETTTGQHTDTLNQKTLADTHLTEETLKVTAIPEPADQKTATPTVLSSSHSHRGKPSIFYQQGLPDSHLTEEALKVSAAPGLADQTTGMSTLTSTSYSHREKPGTFYQQELPESNLTEEPLEVSAAPGPVEQKTGIPTVSSTSHSHVEDLLFFYRQTLPDGHLTDQALKVSAVSGPADQKTGTATVLSTPHSHREKPGIFYQQEFADSHQTEETLTKVSATPGPADQKTEIPAVQSSSYSQREKPSILYPQDLADSHLPEEGLKVSAVAGPADQKTGLPTVPSSAYSHREKLLVFYQQALLDSHLPEEALKVSAVSGPADGKTGTPAVTSTSSASSSLGEKPSAFYQQTLPNSHLTEEALKVSIVPGPGDQKTGIPSAPSSFYSHREKPIIFSQQTLPDFLFPEEALKVSAVSVLAAQKTGTPTVSSNSHSHSEKSSVFYQQELPDSDLPRESLKMSAIPGLTDQKTVPTPTVPSGSFSHREKPSIFYQQEWPDSYATEKALKVSTGPGPADQKTEIPAVQSSSYPQREKPSVLYPQVLSDSHLPEESLKVSAFPGPADQMTDTPAVPSTFYSQREKPGIFYQQTLPESHLPKEALKISVAPGLADQKTGTPTVTSTSYSQHREKPSIFHQQALPGTHIPEEAQKVSAVTGPGNQKTWIPRVLSTFYSQREKPGIFYQQTLPGSHIPEEAQKVSPVLGPADQKTGTPTPTSASYSHTEKPGIFYQQVLPDNHPTEEALKISVASEPVDQTTGTPAVTSTSYSQYREKPSIFYQQSLPSSHLTEEAKNVSAVPGPADQKTVIPILPSTFYSHTEKPGVFYQQVLPHSHPTEEALKISVASEPVDQTTGTPTVTSTSYSQHTEKPSIFYQQSLPGSHLTEEAKNVSAVPGPGDRKTGIPTLPSTFYSHTEKPGSFYQQVLPHSHLPEEALEVSVAPGPVDQTIGTPTVTSPSSSFGEKPIVIYKQAFPEGHLPEESLKVSVAPGPVGQTTGAPTITSPSYSQHRAKSGSFYQLALLGSQIPEEALRVSSAPGPADQTTGIPTITSTSYSFGEKPIVNYKQAFPDGHLPEEALKVSIVSGPTEKKTDIPAGPLGSSALGEKPITFYRQALLDSPLNKEVVKVSAAPGPADQKTETLPVHSTSYSNRGKPVIFYQQTLSDSHLPEEALKVPPVPGPDAQKTETPSVSSSLYSYREKPIVFYQQALPDSELTQEALKVSAVPQPADQKTGLSTVTSSFYSHTEKPNISYQQELPDSHLTEEALKVSNVPGPADQKTGVSTVTSTSYSHREKPIVSYQRELPHFTEAGLKILRVPGPADQKTGINILPSNSYPQREHSVISYEQELPDLTEVTLKAIGVPGPADQKTGIQIASSSSYSNREKASIFHQQELPDVTEEALNVFVVPGQGDRKTEIPTVPLSYYSRREKPSVISQQELPDSHLTEEALKVSPVSIPAEQKTGIPIGLSSSYSHSHKEKLKISTVHIPDDQKTEFPAATLSSYSQIEKPKISTVIGPNDQKTPSQTAFHSSYSQTVKPNILFQQQLPDRDQSKGILKISAVPELTDVNTGKPVSLSSSYFHREKSNIFSPQELPGSHVTEDVLKVSTIPGPAGQKTVLPTALPSSFSHREKPDIFYQKDLPDRHLTEDALKISSALGQADQITGLQTVPSGTYSHGENHKLVSEHVQRLIDNLNSSDSSVSSNNVLLNSQADDRVVINKPESAGFRDVGSEEIQDAENSAKTLKEIRTLLMEAENMALKRCNFPAPLARFRDISDISFIQSKKVVCFKEPSSTGVSNGDLLHRQPFTEESPSSRCIQKDIGTQTNLKCRRGIENWEFISSTTVRSPLQEAESKVSMALEETLRQYQAAKSVMRSEPEGCSGTIGNKIIIPMMTVIKSDSSSDASDGNGSCSWDSNLPESLESVSDVLLNFFPYVSPKTSITDSREEEGVSESEDGGGSSVDSLAAHVKNLLQCESSLNHAKEILRNAEEEESRVRAHAWNMKFNLAHDCGYSISELNEDDRRKVEEIKAELFGHGRTTDLSKGLQSPRGMGCKPEAVCSHIIIESHEKGCFRTLTSEHPQLDRHPCAFRSAGPSEMTRGRQNPSSCRAKHVNLSASLDQNNSHFKVWNSLQLKSHSPFQNFIPDEFKISKGLRMPFDEKMDPWLSELVEPAFVPPKEVDFHSSSQMPSPEPMKKFTTSITFSSHRHSKCISNSSVVKVGVTEGSQCTGASVGVFNSHFTEEQNPPRDLKQKTSSPSSFKMHSNSQDKEVTILAEGRRQSQKLPVDFERSFQEEKPLERSDFTGSHSEPSTRANCSNFKEIQISDNHTLISMGRPSSTLGVNRSSSRLGVKEKNVTITPDLPSCIFLEQRELFEQSKAPRADDHVRKHHSPSPQHQDYVAPDLPSCIFLEQRELFEQCKAPYVDHQMRENHSPLPQGQDSIASDLPSPISLEQCQSKAPGVDDQMNKHHFPLPQGQDCVVEKNNQHKPKSHISNINVEAKFNTVVSQSAPNHCTLAASASTPPSNRKALSCVHITLCPKTSSKLDSGTLDERFHSLDAASKARMNSEFNFDLHTVSSRSLEPTSKLLTSKPVAQDQESLGFLGPKSSLDFQVVQPSLPDSNTITQDLKTIPSQNSQIVTSRQIQVNISDFEGHSNPEGTPVFADRLPEKMKTPLSAFSEKLSSDAVTQITTESPEKTLFSSEIFINAEDRGHEIIEPGNQKLRKAPVKFASSSSVQQVTFSRGTDGQPLLLPYKPSGSTKMYYVPQLRQIPPSPDSKSDTTVESSHSGSNDAIAPDFPAQVLGTRDDDLSATVNIKHKEGIYSKRVVTKASLPVGEKPLQNENADASVQVLITGDENLSDKKQQEIHSTRAVTEAAQAKEKESLQKDTADSSAAAAAEHSAQVGDPEMKNLPDTKAITQKEEIHRKKTVPEEAWPNNKESLQINIEESECHSEFENTTRSVFRSAKFYIHHPVHLPSDQDICHESLGKSVFMRHSWKDFFQHHPDKHREHMCLPLPYQNMDKTKTDYTRIKSLSINVNLGNKEVMDTTKSQVRDYPKHNGQISDPQRDQKVTPEQTTQHTVSLNELWNKYRERQRQQRQPELGDRKELSLVDRLDRLAKILQNPITHSLQVSESTHDDSRGERSVKEWSGRQQQRNKLQKKKRFKSLEKSHKNTGELKKSKVLSHHRAGRSNQIKIEQIKFDKYILSKQPGFNYISNTSSDCRPSEESELLTDTTTNILSGTTSTVESDILTQTDREVALHERSSSVSTIDTARLIQAFGHERVCLSPRRIKLYSSITNQQRRYLEKRSKHSKKVLNTGHPLVTSEHTRRRHIQVANHVISSDSISSSASSFLSSNSTFCNKQNVHMLNKGIQAGNLEIVNGAKKHTRDVGITFPTPSSSEAKLEENSDVTSWSEEKREEKMLFTGYPEDRKLKKNKKNSHEGVSWFVPVENVESRSKKENVPNTCGPGISWFEPITKTRPWREPLREQNCQGQHLDGRGYLAGPGREAGRDLLRPFVRATLQESLQFHRPDFISRSGERIKRLKLIVQERKLQSMLQTERDALFNIDRERQGHQNRMCPLPKRVFLAIQKNKPISKKEMIQRSKRIYEQLPEVQKKREEEKRKSEYKSYRLRAQLYKKRVTNQLLGRKVPWD</sequence>
<proteinExistence type="evidence at protein level"/>
<name>ALMS1_HUMAN</name>
<comment type="function">
    <text evidence="7">Involved in PCM1-dependent intracellular transport. Required, directly or indirectly, for the localization of NCAPD2 to the proximal ends of centrioles. Required for proper formation and/or maintenance of primary cilia (PC), microtubule-based structures that protrude from the surface of epithelial cells.</text>
</comment>
<comment type="interaction">
    <interactant intactId="EBI-308651">
        <id>Q8TCU4</id>
    </interactant>
    <interactant intactId="EBI-529989">
        <id>Q9NRI5</id>
        <label>DISC1</label>
    </interactant>
    <organismsDiffer>false</organismsDiffer>
    <experiments>3</experiments>
</comment>
<comment type="subcellular location">
    <subcellularLocation>
        <location>Cytoplasm</location>
    </subcellularLocation>
    <subcellularLocation>
        <location evidence="4">Cytoplasm</location>
        <location evidence="4">Cytoskeleton</location>
        <location evidence="4">Microtubule organizing center</location>
        <location evidence="4">Centrosome</location>
    </subcellularLocation>
    <subcellularLocation>
        <location>Cytoplasm</location>
        <location>Cytoskeleton</location>
        <location>Cilium basal body</location>
    </subcellularLocation>
    <subcellularLocation>
        <location>Cytoplasm</location>
        <location>Cytoskeleton</location>
        <location>Spindle pole</location>
    </subcellularLocation>
    <text>Associated with centrosomes and basal bodies at the base of primary cilia. Specifically locates to the proximal ends of centrioles and basal bodies. Colocalizes partially with NCAPD2 at these sites. During mitosis localizes to both spindle poles.</text>
</comment>
<comment type="alternative products">
    <event type="alternative splicing"/>
    <isoform>
        <id>Q8TCU4-1</id>
        <name>1</name>
        <sequence type="displayed"/>
    </isoform>
    <isoform>
        <id>Q8TCU4-2</id>
        <name>2</name>
        <sequence type="described" ref="VSP_017349"/>
    </isoform>
    <isoform>
        <id>Q8TCU4-3</id>
        <name>3</name>
        <sequence type="described" ref="VSP_017347 VSP_017348"/>
    </isoform>
</comment>
<comment type="tissue specificity">
    <text evidence="2 3">Expressed in all tissues tested including adipose and pancreas. Expressed by beta-cells of the islets in the pancreas (at protein level).</text>
</comment>
<comment type="developmental stage">
    <text evidence="2 3">Widely expressed in fetal tissues. Detected in fetal pancreas, skeletal muscle, liver, kidney and brain (at protein level). Expressed in fetal aorta and brain.</text>
</comment>
<comment type="disease" evidence="2 3">
    <disease id="DI-00083">
        <name>Alstrom syndrome</name>
        <acronym>ALMS</acronym>
        <description>A rare autosomal recessive disorder characterized by progressive cone-rod retinal dystrophy, neurosensory hearing loss, early childhood obesity and diabetes mellitus type 2. Dilated cardiomyopathy, acanthosis nigricans, male hypogonadism, hypothyroidism, developmental delay and hepatic dysfunction can also be associated with the syndrome.</description>
        <dbReference type="MIM" id="203800"/>
    </disease>
    <text>The disease is caused by variants affecting the gene represented in this entry.</text>
</comment>
<comment type="similarity">
    <text evidence="10">Belongs to the ALMS1 family.</text>
</comment>
<keyword id="KW-0025">Alternative splicing</keyword>
<keyword id="KW-0966">Cell projection</keyword>
<keyword id="KW-1186">Ciliopathy</keyword>
<keyword id="KW-0969">Cilium</keyword>
<keyword id="KW-0182">Cone-rod dystrophy</keyword>
<keyword id="KW-0963">Cytoplasm</keyword>
<keyword id="KW-0206">Cytoskeleton</keyword>
<keyword id="KW-0209">Deafness</keyword>
<keyword id="KW-0219">Diabetes mellitus</keyword>
<keyword id="KW-0550">Obesity</keyword>
<keyword id="KW-0597">Phosphoprotein</keyword>
<keyword id="KW-1267">Proteomics identification</keyword>
<keyword id="KW-1185">Reference proteome</keyword>
<keyword id="KW-0677">Repeat</keyword>
<feature type="chain" id="PRO_0000225592" description="Centrosome-associated protein ALMS1">
    <location>
        <begin position="1"/>
        <end position="4168"/>
    </location>
</feature>
<feature type="repeat" description="1">
    <location>
        <begin position="539"/>
        <end position="585"/>
    </location>
</feature>
<feature type="repeat" description="2">
    <location>
        <begin position="586"/>
        <end position="632"/>
    </location>
</feature>
<feature type="repeat" description="3">
    <location>
        <begin position="633"/>
        <end position="679"/>
    </location>
</feature>
<feature type="repeat" description="4">
    <location>
        <begin position="680"/>
        <end position="726"/>
    </location>
</feature>
<feature type="repeat" description="5">
    <location>
        <begin position="727"/>
        <end position="774"/>
    </location>
</feature>
<feature type="repeat" description="6">
    <location>
        <begin position="775"/>
        <end position="821"/>
    </location>
</feature>
<feature type="repeat" description="7">
    <location>
        <begin position="822"/>
        <end position="871"/>
    </location>
</feature>
<feature type="repeat" description="8">
    <location>
        <begin position="872"/>
        <end position="918"/>
    </location>
</feature>
<feature type="repeat" description="9">
    <location>
        <begin position="919"/>
        <end position="965"/>
    </location>
</feature>
<feature type="repeat" description="10">
    <location>
        <begin position="966"/>
        <end position="1013"/>
    </location>
</feature>
<feature type="repeat" description="11">
    <location>
        <begin position="1014"/>
        <end position="1060"/>
    </location>
</feature>
<feature type="repeat" description="12">
    <location>
        <begin position="1061"/>
        <end position="1107"/>
    </location>
</feature>
<feature type="repeat" description="13">
    <location>
        <begin position="1108"/>
        <end position="1155"/>
    </location>
</feature>
<feature type="repeat" description="14">
    <location>
        <begin position="1156"/>
        <end position="1202"/>
    </location>
</feature>
<feature type="repeat" description="15">
    <location>
        <begin position="1203"/>
        <end position="1249"/>
    </location>
</feature>
<feature type="repeat" description="16">
    <location>
        <begin position="1250"/>
        <end position="1297"/>
    </location>
</feature>
<feature type="repeat" description="17">
    <location>
        <begin position="1298"/>
        <end position="1344"/>
    </location>
</feature>
<feature type="repeat" description="18">
    <location>
        <begin position="1345"/>
        <end position="1392"/>
    </location>
</feature>
<feature type="repeat" description="19">
    <location>
        <begin position="1393"/>
        <end position="1439"/>
    </location>
</feature>
<feature type="repeat" description="20">
    <location>
        <begin position="1440"/>
        <end position="1486"/>
    </location>
</feature>
<feature type="repeat" description="21">
    <location>
        <begin position="1487"/>
        <end position="1534"/>
    </location>
</feature>
<feature type="repeat" description="22">
    <location>
        <begin position="1535"/>
        <end position="1581"/>
    </location>
</feature>
<feature type="repeat" description="23">
    <location>
        <begin position="1582"/>
        <end position="1628"/>
    </location>
</feature>
<feature type="repeat" description="24">
    <location>
        <begin position="1629"/>
        <end position="1675"/>
    </location>
</feature>
<feature type="repeat" description="25">
    <location>
        <begin position="1676"/>
        <end position="1722"/>
    </location>
</feature>
<feature type="repeat" description="26">
    <location>
        <begin position="1723"/>
        <end position="1769"/>
    </location>
</feature>
<feature type="repeat" description="27">
    <location>
        <begin position="1770"/>
        <end position="1816"/>
    </location>
</feature>
<feature type="repeat" description="28">
    <location>
        <begin position="1817"/>
        <end position="1861"/>
    </location>
</feature>
<feature type="repeat" description="29">
    <location>
        <begin position="1862"/>
        <end position="1906"/>
    </location>
</feature>
<feature type="repeat" description="30">
    <location>
        <begin position="1907"/>
        <end position="1951"/>
    </location>
</feature>
<feature type="repeat" description="31">
    <location>
        <begin position="1952"/>
        <end position="1999"/>
    </location>
</feature>
<feature type="repeat" description="32">
    <location>
        <begin position="2060"/>
        <end position="2105"/>
    </location>
</feature>
<feature type="repeat" description="33">
    <location>
        <begin position="2106"/>
        <end position="2152"/>
    </location>
</feature>
<feature type="repeat" description="34">
    <location>
        <begin position="2153"/>
        <end position="2200"/>
    </location>
</feature>
<feature type="region of interest" description="Disordered" evidence="1">
    <location>
        <begin position="1"/>
        <end position="69"/>
    </location>
</feature>
<feature type="region of interest" description="34 X 47 AA approximate tandem repeat">
    <location>
        <begin position="539"/>
        <end position="2200"/>
    </location>
</feature>
<feature type="region of interest" description="Disordered" evidence="1">
    <location>
        <begin position="558"/>
        <end position="579"/>
    </location>
</feature>
<feature type="region of interest" description="Disordered" evidence="1">
    <location>
        <begin position="606"/>
        <end position="625"/>
    </location>
</feature>
<feature type="region of interest" description="Disordered" evidence="1">
    <location>
        <begin position="699"/>
        <end position="718"/>
    </location>
</feature>
<feature type="region of interest" description="Disordered" evidence="1">
    <location>
        <begin position="735"/>
        <end position="769"/>
    </location>
</feature>
<feature type="region of interest" description="Disordered" evidence="1">
    <location>
        <begin position="841"/>
        <end position="865"/>
    </location>
</feature>
<feature type="region of interest" description="Disordered" evidence="1">
    <location>
        <begin position="946"/>
        <end position="969"/>
    </location>
</feature>
<feature type="region of interest" description="Disordered" evidence="1">
    <location>
        <begin position="983"/>
        <end position="1007"/>
    </location>
</feature>
<feature type="region of interest" description="Disordered" evidence="1">
    <location>
        <begin position="1027"/>
        <end position="1055"/>
    </location>
</feature>
<feature type="region of interest" description="Disordered" evidence="1">
    <location>
        <begin position="1221"/>
        <end position="1241"/>
    </location>
</feature>
<feature type="region of interest" description="Disordered" evidence="1">
    <location>
        <begin position="1786"/>
        <end position="1806"/>
    </location>
</feature>
<feature type="region of interest" description="Disordered" evidence="1">
    <location>
        <begin position="2456"/>
        <end position="2477"/>
    </location>
</feature>
<feature type="region of interest" description="Disordered" evidence="1">
    <location>
        <begin position="2600"/>
        <end position="2621"/>
    </location>
</feature>
<feature type="region of interest" description="Disordered" evidence="1">
    <location>
        <begin position="2753"/>
        <end position="2828"/>
    </location>
</feature>
<feature type="region of interest" description="Disordered" evidence="1">
    <location>
        <begin position="2892"/>
        <end position="2912"/>
    </location>
</feature>
<feature type="region of interest" description="Disordered" evidence="1">
    <location>
        <begin position="3283"/>
        <end position="3310"/>
    </location>
</feature>
<feature type="region of interest" description="Disordered" evidence="1">
    <location>
        <begin position="3389"/>
        <end position="3426"/>
    </location>
</feature>
<feature type="region of interest" description="Disordered" evidence="1">
    <location>
        <begin position="3566"/>
        <end position="3594"/>
    </location>
</feature>
<feature type="region of interest" description="Disordered" evidence="1">
    <location>
        <begin position="3643"/>
        <end position="3704"/>
    </location>
</feature>
<feature type="region of interest" description="ALMS motif">
    <location>
        <begin position="4036"/>
        <end position="4167"/>
    </location>
</feature>
<feature type="compositionally biased region" description="Acidic residues" evidence="1">
    <location>
        <begin position="1"/>
        <end position="29"/>
    </location>
</feature>
<feature type="compositionally biased region" description="Low complexity" evidence="1">
    <location>
        <begin position="30"/>
        <end position="40"/>
    </location>
</feature>
<feature type="compositionally biased region" description="Basic and acidic residues" evidence="1">
    <location>
        <begin position="49"/>
        <end position="58"/>
    </location>
</feature>
<feature type="compositionally biased region" description="Polar residues" evidence="1">
    <location>
        <begin position="564"/>
        <end position="574"/>
    </location>
</feature>
<feature type="compositionally biased region" description="Polar residues" evidence="1">
    <location>
        <begin position="609"/>
        <end position="622"/>
    </location>
</feature>
<feature type="compositionally biased region" description="Polar residues" evidence="1">
    <location>
        <begin position="705"/>
        <end position="715"/>
    </location>
</feature>
<feature type="compositionally biased region" description="Polar residues" evidence="1">
    <location>
        <begin position="989"/>
        <end position="1003"/>
    </location>
</feature>
<feature type="compositionally biased region" description="Polar residues" evidence="1">
    <location>
        <begin position="1228"/>
        <end position="1240"/>
    </location>
</feature>
<feature type="compositionally biased region" description="Low complexity" evidence="1">
    <location>
        <begin position="1796"/>
        <end position="1806"/>
    </location>
</feature>
<feature type="compositionally biased region" description="Basic and acidic residues" evidence="1">
    <location>
        <begin position="2754"/>
        <end position="2766"/>
    </location>
</feature>
<feature type="compositionally biased region" description="Polar residues" evidence="1">
    <location>
        <begin position="2767"/>
        <end position="2779"/>
    </location>
</feature>
<feature type="compositionally biased region" description="Basic and acidic residues" evidence="1">
    <location>
        <begin position="2780"/>
        <end position="2793"/>
    </location>
</feature>
<feature type="compositionally biased region" description="Basic and acidic residues" evidence="1">
    <location>
        <begin position="2800"/>
        <end position="2816"/>
    </location>
</feature>
<feature type="compositionally biased region" description="Polar residues" evidence="1">
    <location>
        <begin position="2817"/>
        <end position="2828"/>
    </location>
</feature>
<feature type="compositionally biased region" description="Polar residues" evidence="1">
    <location>
        <begin position="3294"/>
        <end position="3305"/>
    </location>
</feature>
<feature type="compositionally biased region" description="Basic and acidic residues" evidence="1">
    <location>
        <begin position="3392"/>
        <end position="3404"/>
    </location>
</feature>
<feature type="compositionally biased region" description="Low complexity" evidence="1">
    <location>
        <begin position="3405"/>
        <end position="3416"/>
    </location>
</feature>
<feature type="compositionally biased region" description="Basic and acidic residues" evidence="1">
    <location>
        <begin position="3649"/>
        <end position="3664"/>
    </location>
</feature>
<feature type="compositionally biased region" description="Basic and acidic residues" evidence="1">
    <location>
        <begin position="3680"/>
        <end position="3694"/>
    </location>
</feature>
<feature type="compositionally biased region" description="Basic residues" evidence="1">
    <location>
        <begin position="3695"/>
        <end position="3704"/>
    </location>
</feature>
<feature type="modified residue" description="Phosphoserine" evidence="12">
    <location>
        <position position="464"/>
    </location>
</feature>
<feature type="modified residue" description="Phosphoserine" evidence="12">
    <location>
        <position position="1189"/>
    </location>
</feature>
<feature type="modified residue" description="Phosphoserine" evidence="12">
    <location>
        <position position="2143"/>
    </location>
</feature>
<feature type="modified residue" description="Phosphoserine" evidence="12 13">
    <location>
        <position position="2466"/>
    </location>
</feature>
<feature type="modified residue" description="Phosphoserine" evidence="11 12">
    <location>
        <position position="2632"/>
    </location>
</feature>
<feature type="modified residue" description="Phosphoserine" evidence="12">
    <location>
        <position position="2805"/>
    </location>
</feature>
<feature type="splice variant" id="VSP_017347" description="In isoform 3." evidence="8">
    <original>ANHVISSDS</original>
    <variation>HGYRFHLAM</variation>
    <location>
        <begin position="3851"/>
        <end position="3859"/>
    </location>
</feature>
<feature type="splice variant" id="VSP_017348" description="In isoform 3." evidence="8">
    <location>
        <begin position="3860"/>
        <end position="4167"/>
    </location>
</feature>
<feature type="splice variant" id="VSP_017349" description="In isoform 2." evidence="9">
    <location>
        <begin position="4122"/>
        <end position="4167"/>
    </location>
</feature>
<feature type="sequence variant" id="VAR_080194" description="In dbSNP:rs72540761." evidence="3 6">
    <location>
        <position position="525"/>
    </location>
</feature>
<feature type="sequence variant" id="VAR_025433" description="In dbSNP:rs2037814." evidence="3">
    <original>V</original>
    <variation>G</variation>
    <location>
        <position position="672"/>
    </location>
</feature>
<feature type="sequence variant" id="VAR_056734" description="In dbSNP:rs886038612.">
    <original>G</original>
    <variation>A</variation>
    <location>
        <position position="1413"/>
    </location>
</feature>
<feature type="sequence variant" id="VAR_059575" description="In dbSNP:rs6546838.">
    <original>I</original>
    <variation>V</variation>
    <location>
        <position position="1876"/>
    </location>
</feature>
<feature type="sequence variant" id="VAR_025434" description="In dbSNP:rs6724782." evidence="3">
    <original>S</original>
    <variation>R</variation>
    <location>
        <position position="2112"/>
    </location>
</feature>
<feature type="sequence variant" id="VAR_059576" description="In dbSNP:rs6546839.">
    <original>R</original>
    <variation>P</variation>
    <location>
        <position position="2285"/>
    </location>
</feature>
<feature type="sequence variant" id="VAR_025435" description="In dbSNP:rs3820700." evidence="5">
    <original>S</original>
    <variation>N</variation>
    <location>
        <position position="2575"/>
    </location>
</feature>
<feature type="sequence variant" id="VAR_025436" description="In dbSNP:rs2017116." evidence="5">
    <original>D</original>
    <variation>H</variation>
    <location>
        <position position="2673"/>
    </location>
</feature>
<feature type="sequence variant" id="VAR_059577" description="In dbSNP:rs10193972.">
    <original>N</original>
    <variation>S</variation>
    <location>
        <position position="2857"/>
    </location>
</feature>
<feature type="sequence variant" id="VAR_059578" description="In dbSNP:rs34071195.">
    <original>K</original>
    <variation>E</variation>
    <location>
        <position position="3435"/>
    </location>
</feature>
<feature type="sequence conflict" description="In Ref. 1; CAD10391." evidence="10" ref="1">
    <original>E</original>
    <variation>EE</variation>
    <location>
        <position position="13"/>
    </location>
</feature>
<feature type="sequence conflict" description="In Ref. 1; CAD10391." evidence="10" ref="1">
    <original>S</original>
    <variation>SP</variation>
    <location>
        <position position="524"/>
    </location>
</feature>
<feature type="sequence conflict" description="In Ref. 5; AAH35025/AAH50330." evidence="10" ref="5">
    <original>Q</original>
    <variation>L</variation>
    <location>
        <position position="3417"/>
    </location>
</feature>
<feature type="sequence conflict" description="In Ref. 1; CAD10391 and 3; BAA20786." evidence="10" ref="1 3">
    <original>R</original>
    <variation>K</variation>
    <location>
        <position position="4030"/>
    </location>
</feature>
<evidence type="ECO:0000256" key="1">
    <source>
        <dbReference type="SAM" id="MobiDB-lite"/>
    </source>
</evidence>
<evidence type="ECO:0000269" key="2">
    <source>
    </source>
</evidence>
<evidence type="ECO:0000269" key="3">
    <source>
    </source>
</evidence>
<evidence type="ECO:0000269" key="4">
    <source>
    </source>
</evidence>
<evidence type="ECO:0000269" key="5">
    <source>
    </source>
</evidence>
<evidence type="ECO:0000269" key="6">
    <source>
    </source>
</evidence>
<evidence type="ECO:0000269" key="7">
    <source>
    </source>
</evidence>
<evidence type="ECO:0000303" key="8">
    <source>
    </source>
</evidence>
<evidence type="ECO:0000303" key="9">
    <source>
    </source>
</evidence>
<evidence type="ECO:0000305" key="10"/>
<evidence type="ECO:0007744" key="11">
    <source>
    </source>
</evidence>
<evidence type="ECO:0007744" key="12">
    <source>
    </source>
</evidence>
<evidence type="ECO:0007744" key="13">
    <source>
    </source>
</evidence>
<dbReference type="EMBL" id="AJ417593">
    <property type="protein sequence ID" value="CAD10391.2"/>
    <property type="molecule type" value="mRNA"/>
</dbReference>
<dbReference type="EMBL" id="AC074008">
    <property type="protein sequence ID" value="AAY24208.1"/>
    <property type="molecule type" value="Genomic_DNA"/>
</dbReference>
<dbReference type="EMBL" id="AC092653">
    <property type="status" value="NOT_ANNOTATED_CDS"/>
    <property type="molecule type" value="Genomic_DNA"/>
</dbReference>
<dbReference type="EMBL" id="KF573641">
    <property type="status" value="NOT_ANNOTATED_CDS"/>
    <property type="molecule type" value="Genomic_DNA"/>
</dbReference>
<dbReference type="EMBL" id="AC096546">
    <property type="protein sequence ID" value="AAX82023.1"/>
    <property type="molecule type" value="Genomic_DNA"/>
</dbReference>
<dbReference type="EMBL" id="AB002326">
    <property type="protein sequence ID" value="BAA20786.3"/>
    <property type="molecule type" value="mRNA"/>
</dbReference>
<dbReference type="EMBL" id="BC035025">
    <property type="protein sequence ID" value="AAH35025.1"/>
    <property type="molecule type" value="mRNA"/>
</dbReference>
<dbReference type="EMBL" id="BC050330">
    <property type="protein sequence ID" value="AAH50330.1"/>
    <property type="molecule type" value="mRNA"/>
</dbReference>
<dbReference type="CCDS" id="CCDS42697.1">
    <molecule id="Q8TCU4-1"/>
</dbReference>
<dbReference type="RefSeq" id="NP_001365383.1">
    <molecule id="Q8TCU4-1"/>
    <property type="nucleotide sequence ID" value="NM_001378454.1"/>
</dbReference>
<dbReference type="RefSeq" id="NP_055935.4">
    <property type="nucleotide sequence ID" value="NM_015120.4"/>
</dbReference>
<dbReference type="BioGRID" id="113598">
    <property type="interactions" value="174"/>
</dbReference>
<dbReference type="FunCoup" id="Q8TCU4">
    <property type="interactions" value="1592"/>
</dbReference>
<dbReference type="IntAct" id="Q8TCU4">
    <property type="interactions" value="95"/>
</dbReference>
<dbReference type="MINT" id="Q8TCU4"/>
<dbReference type="STRING" id="9606.ENSP00000482968"/>
<dbReference type="CarbonylDB" id="Q8TCU4"/>
<dbReference type="GlyCosmos" id="Q8TCU4">
    <property type="glycosylation" value="13 sites, 1 glycan"/>
</dbReference>
<dbReference type="GlyGen" id="Q8TCU4">
    <property type="glycosylation" value="38 sites, 2 N-linked glycans (2 sites), 1 O-linked glycan (33 sites)"/>
</dbReference>
<dbReference type="iPTMnet" id="Q8TCU4"/>
<dbReference type="PhosphoSitePlus" id="Q8TCU4"/>
<dbReference type="BioMuta" id="ALMS1"/>
<dbReference type="DMDM" id="296439448"/>
<dbReference type="jPOST" id="Q8TCU4"/>
<dbReference type="MassIVE" id="Q8TCU4"/>
<dbReference type="PaxDb" id="9606-ENSP00000482968"/>
<dbReference type="PeptideAtlas" id="Q8TCU4"/>
<dbReference type="ProteomicsDB" id="74171">
    <molecule id="Q8TCU4-1"/>
</dbReference>
<dbReference type="ProteomicsDB" id="74172">
    <molecule id="Q8TCU4-2"/>
</dbReference>
<dbReference type="ProteomicsDB" id="74173">
    <molecule id="Q8TCU4-3"/>
</dbReference>
<dbReference type="Pumba" id="Q8TCU4"/>
<dbReference type="Antibodypedia" id="8144">
    <property type="antibodies" value="128 antibodies from 26 providers"/>
</dbReference>
<dbReference type="DNASU" id="7840"/>
<dbReference type="Ensembl" id="ENST00000613296.6">
    <molecule id="Q8TCU4-1"/>
    <property type="protein sequence ID" value="ENSP00000482968.1"/>
    <property type="gene ID" value="ENSG00000116127.20"/>
</dbReference>
<dbReference type="GeneID" id="7840"/>
<dbReference type="KEGG" id="hsa:7840"/>
<dbReference type="MANE-Select" id="ENST00000613296.6">
    <property type="protein sequence ID" value="ENSP00000482968.1"/>
    <property type="RefSeq nucleotide sequence ID" value="NM_001378454.1"/>
    <property type="RefSeq protein sequence ID" value="NP_001365383.1"/>
</dbReference>
<dbReference type="AGR" id="HGNC:428"/>
<dbReference type="CTD" id="7840"/>
<dbReference type="DisGeNET" id="7840"/>
<dbReference type="GeneCards" id="ALMS1"/>
<dbReference type="GeneReviews" id="ALMS1"/>
<dbReference type="HGNC" id="HGNC:428">
    <property type="gene designation" value="ALMS1"/>
</dbReference>
<dbReference type="HPA" id="ENSG00000116127">
    <property type="expression patterns" value="Tissue enhanced (testis)"/>
</dbReference>
<dbReference type="MalaCards" id="ALMS1"/>
<dbReference type="MIM" id="203800">
    <property type="type" value="phenotype"/>
</dbReference>
<dbReference type="MIM" id="606844">
    <property type="type" value="gene"/>
</dbReference>
<dbReference type="neXtProt" id="NX_Q8TCU4"/>
<dbReference type="OpenTargets" id="ENSG00000116127"/>
<dbReference type="Orphanet" id="64">
    <property type="disease" value="Alstroem syndrome"/>
</dbReference>
<dbReference type="PharmGKB" id="PA24721"/>
<dbReference type="VEuPathDB" id="HostDB:ENSG00000116127"/>
<dbReference type="eggNOG" id="KOG4613">
    <property type="taxonomic scope" value="Eukaryota"/>
</dbReference>
<dbReference type="GeneTree" id="ENSGT00940000153123"/>
<dbReference type="InParanoid" id="Q8TCU4"/>
<dbReference type="OMA" id="PYSQRDQ"/>
<dbReference type="OrthoDB" id="6163239at2759"/>
<dbReference type="PAN-GO" id="Q8TCU4">
    <property type="GO annotations" value="4 GO annotations based on evolutionary models"/>
</dbReference>
<dbReference type="PhylomeDB" id="Q8TCU4"/>
<dbReference type="TreeFam" id="TF335596"/>
<dbReference type="PathwayCommons" id="Q8TCU4"/>
<dbReference type="Reactome" id="R-HSA-2565942">
    <property type="pathway name" value="Regulation of PLK1 Activity at G2/M Transition"/>
</dbReference>
<dbReference type="Reactome" id="R-HSA-380259">
    <property type="pathway name" value="Loss of Nlp from mitotic centrosomes"/>
</dbReference>
<dbReference type="Reactome" id="R-HSA-380270">
    <property type="pathway name" value="Recruitment of mitotic centrosome proteins and complexes"/>
</dbReference>
<dbReference type="Reactome" id="R-HSA-380284">
    <property type="pathway name" value="Loss of proteins required for interphase microtubule organization from the centrosome"/>
</dbReference>
<dbReference type="Reactome" id="R-HSA-380320">
    <property type="pathway name" value="Recruitment of NuMA to mitotic centrosomes"/>
</dbReference>
<dbReference type="Reactome" id="R-HSA-5620912">
    <property type="pathway name" value="Anchoring of the basal body to the plasma membrane"/>
</dbReference>
<dbReference type="Reactome" id="R-HSA-8854518">
    <property type="pathway name" value="AURKA Activation by TPX2"/>
</dbReference>
<dbReference type="SignaLink" id="Q8TCU4"/>
<dbReference type="BioGRID-ORCS" id="7840">
    <property type="hits" value="14 hits in 1157 CRISPR screens"/>
</dbReference>
<dbReference type="CD-CODE" id="8C2F96ED">
    <property type="entry name" value="Centrosome"/>
</dbReference>
<dbReference type="ChiTaRS" id="ALMS1">
    <property type="organism name" value="human"/>
</dbReference>
<dbReference type="GenomeRNAi" id="7840"/>
<dbReference type="Pharos" id="Q8TCU4">
    <property type="development level" value="Tbio"/>
</dbReference>
<dbReference type="PRO" id="PR:Q8TCU4"/>
<dbReference type="Proteomes" id="UP000005640">
    <property type="component" value="Chromosome 2"/>
</dbReference>
<dbReference type="RNAct" id="Q8TCU4">
    <property type="molecule type" value="protein"/>
</dbReference>
<dbReference type="Bgee" id="ENSG00000116127">
    <property type="expression patterns" value="Expressed in buccal mucosa cell and 202 other cell types or tissues"/>
</dbReference>
<dbReference type="ExpressionAtlas" id="Q8TCU4">
    <property type="expression patterns" value="baseline and differential"/>
</dbReference>
<dbReference type="GO" id="GO:0005813">
    <property type="term" value="C:centrosome"/>
    <property type="evidence" value="ECO:0000314"/>
    <property type="project" value="HPA"/>
</dbReference>
<dbReference type="GO" id="GO:0036064">
    <property type="term" value="C:ciliary basal body"/>
    <property type="evidence" value="ECO:0000314"/>
    <property type="project" value="HPA"/>
</dbReference>
<dbReference type="GO" id="GO:0005829">
    <property type="term" value="C:cytosol"/>
    <property type="evidence" value="ECO:0000314"/>
    <property type="project" value="HPA"/>
</dbReference>
<dbReference type="GO" id="GO:0015630">
    <property type="term" value="C:microtubule cytoskeleton"/>
    <property type="evidence" value="ECO:0000314"/>
    <property type="project" value="HPA"/>
</dbReference>
<dbReference type="GO" id="GO:0005739">
    <property type="term" value="C:mitochondrion"/>
    <property type="evidence" value="ECO:0000314"/>
    <property type="project" value="HPA"/>
</dbReference>
<dbReference type="GO" id="GO:0005654">
    <property type="term" value="C:nucleoplasm"/>
    <property type="evidence" value="ECO:0000314"/>
    <property type="project" value="HPA"/>
</dbReference>
<dbReference type="GO" id="GO:0000922">
    <property type="term" value="C:spindle pole"/>
    <property type="evidence" value="ECO:0007669"/>
    <property type="project" value="UniProtKB-SubCell"/>
</dbReference>
<dbReference type="GO" id="GO:0016197">
    <property type="term" value="P:endosomal transport"/>
    <property type="evidence" value="ECO:0000315"/>
    <property type="project" value="MGI"/>
</dbReference>
<dbReference type="GO" id="GO:0120162">
    <property type="term" value="P:positive regulation of cold-induced thermogenesis"/>
    <property type="evidence" value="ECO:0000250"/>
    <property type="project" value="YuBioLab"/>
</dbReference>
<dbReference type="GO" id="GO:0046599">
    <property type="term" value="P:regulation of centriole replication"/>
    <property type="evidence" value="ECO:0000318"/>
    <property type="project" value="GO_Central"/>
</dbReference>
<dbReference type="GO" id="GO:0051492">
    <property type="term" value="P:regulation of stress fiber assembly"/>
    <property type="evidence" value="ECO:0000315"/>
    <property type="project" value="MGI"/>
</dbReference>
<dbReference type="InterPro" id="IPR029299">
    <property type="entry name" value="ALMS_motif"/>
</dbReference>
<dbReference type="InterPro" id="IPR040972">
    <property type="entry name" value="ALMS_repeat"/>
</dbReference>
<dbReference type="PANTHER" id="PTHR21553">
    <property type="entry name" value="ALMS1-RELATED"/>
    <property type="match status" value="1"/>
</dbReference>
<dbReference type="PANTHER" id="PTHR21553:SF22">
    <property type="entry name" value="CENTROSOME-ASSOCIATED PROTEIN ALMS1"/>
    <property type="match status" value="1"/>
</dbReference>
<dbReference type="Pfam" id="PF15309">
    <property type="entry name" value="ALMS_motif"/>
    <property type="match status" value="1"/>
</dbReference>
<dbReference type="Pfam" id="PF18727">
    <property type="entry name" value="ALMS_repeat"/>
    <property type="match status" value="35"/>
</dbReference>
<accession>Q8TCU4</accession>
<accession>A0A087WZY3</accession>
<accession>Q53S05</accession>
<accession>Q580Q8</accession>
<accession>Q86VP9</accession>
<accession>Q9Y4G4</accession>
<protein>
    <recommendedName>
        <fullName evidence="10">Centrosome-associated protein ALMS1</fullName>
    </recommendedName>
    <alternativeName>
        <fullName>Alstrom syndrome protein 1</fullName>
    </alternativeName>
</protein>